<gene>
    <name evidence="1" type="primary">dapE</name>
    <name type="ordered locus">VS_2301</name>
</gene>
<reference key="1">
    <citation type="submission" date="2009-02" db="EMBL/GenBank/DDBJ databases">
        <title>Vibrio splendidus str. LGP32 complete genome.</title>
        <authorList>
            <person name="Mazel D."/>
            <person name="Le Roux F."/>
        </authorList>
    </citation>
    <scope>NUCLEOTIDE SEQUENCE [LARGE SCALE GENOMIC DNA]</scope>
    <source>
        <strain>LGP32</strain>
    </source>
</reference>
<proteinExistence type="inferred from homology"/>
<comment type="function">
    <text evidence="1">Catalyzes the hydrolysis of N-succinyl-L,L-diaminopimelic acid (SDAP), forming succinate and LL-2,6-diaminopimelate (DAP), an intermediate involved in the bacterial biosynthesis of lysine and meso-diaminopimelic acid, an essential component of bacterial cell walls.</text>
</comment>
<comment type="catalytic activity">
    <reaction evidence="1">
        <text>N-succinyl-(2S,6S)-2,6-diaminopimelate + H2O = (2S,6S)-2,6-diaminopimelate + succinate</text>
        <dbReference type="Rhea" id="RHEA:22608"/>
        <dbReference type="ChEBI" id="CHEBI:15377"/>
        <dbReference type="ChEBI" id="CHEBI:30031"/>
        <dbReference type="ChEBI" id="CHEBI:57609"/>
        <dbReference type="ChEBI" id="CHEBI:58087"/>
        <dbReference type="EC" id="3.5.1.18"/>
    </reaction>
</comment>
<comment type="cofactor">
    <cofactor evidence="1">
        <name>Zn(2+)</name>
        <dbReference type="ChEBI" id="CHEBI:29105"/>
    </cofactor>
    <cofactor evidence="1">
        <name>Co(2+)</name>
        <dbReference type="ChEBI" id="CHEBI:48828"/>
    </cofactor>
    <text evidence="1">Binds 2 Zn(2+) or Co(2+) ions per subunit.</text>
</comment>
<comment type="pathway">
    <text evidence="1">Amino-acid biosynthesis; L-lysine biosynthesis via DAP pathway; LL-2,6-diaminopimelate from (S)-tetrahydrodipicolinate (succinylase route): step 3/3.</text>
</comment>
<comment type="subunit">
    <text evidence="1">Homodimer.</text>
</comment>
<comment type="similarity">
    <text evidence="1">Belongs to the peptidase M20A family. DapE subfamily.</text>
</comment>
<keyword id="KW-0028">Amino-acid biosynthesis</keyword>
<keyword id="KW-0170">Cobalt</keyword>
<keyword id="KW-0220">Diaminopimelate biosynthesis</keyword>
<keyword id="KW-0378">Hydrolase</keyword>
<keyword id="KW-0457">Lysine biosynthesis</keyword>
<keyword id="KW-0479">Metal-binding</keyword>
<keyword id="KW-0862">Zinc</keyword>
<accession>B7VIL8</accession>
<sequence length="378" mass="41135">MTDSPTLALAKDLISRQSVTPEDAGCQDLMIERLKALGFEIEVMVFEDTTNFWARRGTEAPLFAFAGHTDVVPAGPIEQWNTKPFEPTIIDGFLHGRGAADMKGSLASMVVAVEQFIAKHPDHTGSIGFLITSDEEGPFINGTVRVVEALMARGENIDMCIVGEPSSTEYVGDVVKNGRRGSITGDLTIKGTQGHVAYPHLANNPVHSSLLAINELATTEWDKGNDYFPPTSFQIPNVSAGTGASNVIPGEFNVQFNLRFSTELNNDIIVERITNTLDKYDFEYDLKWTFNGDPFLTDAGSLLDAIVDAVGHVNDVKPALLTTGGTSDGRFIARMKGQVVELGPVNATIHKVNECVKVADLEKLTDMYERTLVNLFAK</sequence>
<feature type="chain" id="PRO_0000375772" description="Succinyl-diaminopimelate desuccinylase">
    <location>
        <begin position="1"/>
        <end position="378"/>
    </location>
</feature>
<feature type="active site" evidence="1">
    <location>
        <position position="70"/>
    </location>
</feature>
<feature type="active site" description="Proton acceptor" evidence="1">
    <location>
        <position position="135"/>
    </location>
</feature>
<feature type="binding site" evidence="1">
    <location>
        <position position="68"/>
    </location>
    <ligand>
        <name>Zn(2+)</name>
        <dbReference type="ChEBI" id="CHEBI:29105"/>
        <label>1</label>
    </ligand>
</feature>
<feature type="binding site" evidence="1">
    <location>
        <position position="101"/>
    </location>
    <ligand>
        <name>Zn(2+)</name>
        <dbReference type="ChEBI" id="CHEBI:29105"/>
        <label>1</label>
    </ligand>
</feature>
<feature type="binding site" evidence="1">
    <location>
        <position position="101"/>
    </location>
    <ligand>
        <name>Zn(2+)</name>
        <dbReference type="ChEBI" id="CHEBI:29105"/>
        <label>2</label>
    </ligand>
</feature>
<feature type="binding site" evidence="1">
    <location>
        <position position="136"/>
    </location>
    <ligand>
        <name>Zn(2+)</name>
        <dbReference type="ChEBI" id="CHEBI:29105"/>
        <label>2</label>
    </ligand>
</feature>
<feature type="binding site" evidence="1">
    <location>
        <position position="164"/>
    </location>
    <ligand>
        <name>Zn(2+)</name>
        <dbReference type="ChEBI" id="CHEBI:29105"/>
        <label>1</label>
    </ligand>
</feature>
<feature type="binding site" evidence="1">
    <location>
        <position position="350"/>
    </location>
    <ligand>
        <name>Zn(2+)</name>
        <dbReference type="ChEBI" id="CHEBI:29105"/>
        <label>2</label>
    </ligand>
</feature>
<protein>
    <recommendedName>
        <fullName evidence="1">Succinyl-diaminopimelate desuccinylase</fullName>
        <shortName evidence="1">SDAP desuccinylase</shortName>
        <ecNumber evidence="1">3.5.1.18</ecNumber>
    </recommendedName>
    <alternativeName>
        <fullName evidence="1">N-succinyl-LL-2,6-diaminoheptanedioate amidohydrolase</fullName>
    </alternativeName>
</protein>
<name>DAPE_VIBA3</name>
<dbReference type="EC" id="3.5.1.18" evidence="1"/>
<dbReference type="EMBL" id="FM954972">
    <property type="protein sequence ID" value="CAV19464.1"/>
    <property type="molecule type" value="Genomic_DNA"/>
</dbReference>
<dbReference type="SMR" id="B7VIL8"/>
<dbReference type="STRING" id="575788.VS_2301"/>
<dbReference type="KEGG" id="vsp:VS_2301"/>
<dbReference type="PATRIC" id="fig|575788.5.peg.3564"/>
<dbReference type="eggNOG" id="COG0624">
    <property type="taxonomic scope" value="Bacteria"/>
</dbReference>
<dbReference type="HOGENOM" id="CLU_021802_4_0_6"/>
<dbReference type="UniPathway" id="UPA00034">
    <property type="reaction ID" value="UER00021"/>
</dbReference>
<dbReference type="Proteomes" id="UP000009100">
    <property type="component" value="Chromosome 1"/>
</dbReference>
<dbReference type="GO" id="GO:0008777">
    <property type="term" value="F:acetylornithine deacetylase activity"/>
    <property type="evidence" value="ECO:0007669"/>
    <property type="project" value="TreeGrafter"/>
</dbReference>
<dbReference type="GO" id="GO:0050897">
    <property type="term" value="F:cobalt ion binding"/>
    <property type="evidence" value="ECO:0007669"/>
    <property type="project" value="UniProtKB-UniRule"/>
</dbReference>
<dbReference type="GO" id="GO:0009014">
    <property type="term" value="F:succinyl-diaminopimelate desuccinylase activity"/>
    <property type="evidence" value="ECO:0007669"/>
    <property type="project" value="UniProtKB-UniRule"/>
</dbReference>
<dbReference type="GO" id="GO:0008270">
    <property type="term" value="F:zinc ion binding"/>
    <property type="evidence" value="ECO:0007669"/>
    <property type="project" value="UniProtKB-UniRule"/>
</dbReference>
<dbReference type="GO" id="GO:0019877">
    <property type="term" value="P:diaminopimelate biosynthetic process"/>
    <property type="evidence" value="ECO:0007669"/>
    <property type="project" value="UniProtKB-UniRule"/>
</dbReference>
<dbReference type="GO" id="GO:0006526">
    <property type="term" value="P:L-arginine biosynthetic process"/>
    <property type="evidence" value="ECO:0007669"/>
    <property type="project" value="TreeGrafter"/>
</dbReference>
<dbReference type="GO" id="GO:0009089">
    <property type="term" value="P:lysine biosynthetic process via diaminopimelate"/>
    <property type="evidence" value="ECO:0007669"/>
    <property type="project" value="UniProtKB-UniRule"/>
</dbReference>
<dbReference type="CDD" id="cd03891">
    <property type="entry name" value="M20_DapE_proteobac"/>
    <property type="match status" value="1"/>
</dbReference>
<dbReference type="FunFam" id="3.40.630.10:FF:000005">
    <property type="entry name" value="Succinyl-diaminopimelate desuccinylase"/>
    <property type="match status" value="1"/>
</dbReference>
<dbReference type="Gene3D" id="3.40.630.10">
    <property type="entry name" value="Zn peptidases"/>
    <property type="match status" value="2"/>
</dbReference>
<dbReference type="HAMAP" id="MF_01690">
    <property type="entry name" value="DapE"/>
    <property type="match status" value="1"/>
</dbReference>
<dbReference type="InterPro" id="IPR001261">
    <property type="entry name" value="ArgE/DapE_CS"/>
</dbReference>
<dbReference type="InterPro" id="IPR036264">
    <property type="entry name" value="Bact_exopeptidase_dim_dom"/>
</dbReference>
<dbReference type="InterPro" id="IPR005941">
    <property type="entry name" value="DapE_proteobac"/>
</dbReference>
<dbReference type="InterPro" id="IPR002933">
    <property type="entry name" value="Peptidase_M20"/>
</dbReference>
<dbReference type="InterPro" id="IPR011650">
    <property type="entry name" value="Peptidase_M20_dimer"/>
</dbReference>
<dbReference type="InterPro" id="IPR050072">
    <property type="entry name" value="Peptidase_M20A"/>
</dbReference>
<dbReference type="NCBIfam" id="TIGR01246">
    <property type="entry name" value="dapE_proteo"/>
    <property type="match status" value="1"/>
</dbReference>
<dbReference type="NCBIfam" id="NF009557">
    <property type="entry name" value="PRK13009.1"/>
    <property type="match status" value="1"/>
</dbReference>
<dbReference type="PANTHER" id="PTHR43808">
    <property type="entry name" value="ACETYLORNITHINE DEACETYLASE"/>
    <property type="match status" value="1"/>
</dbReference>
<dbReference type="PANTHER" id="PTHR43808:SF31">
    <property type="entry name" value="N-ACETYL-L-CITRULLINE DEACETYLASE"/>
    <property type="match status" value="1"/>
</dbReference>
<dbReference type="Pfam" id="PF07687">
    <property type="entry name" value="M20_dimer"/>
    <property type="match status" value="1"/>
</dbReference>
<dbReference type="Pfam" id="PF01546">
    <property type="entry name" value="Peptidase_M20"/>
    <property type="match status" value="1"/>
</dbReference>
<dbReference type="SUPFAM" id="SSF55031">
    <property type="entry name" value="Bacterial exopeptidase dimerisation domain"/>
    <property type="match status" value="1"/>
</dbReference>
<dbReference type="SUPFAM" id="SSF53187">
    <property type="entry name" value="Zn-dependent exopeptidases"/>
    <property type="match status" value="1"/>
</dbReference>
<dbReference type="PROSITE" id="PS00759">
    <property type="entry name" value="ARGE_DAPE_CPG2_2"/>
    <property type="match status" value="1"/>
</dbReference>
<organism>
    <name type="scientific">Vibrio atlanticus (strain LGP32)</name>
    <name type="common">Vibrio splendidus (strain Mel32)</name>
    <dbReference type="NCBI Taxonomy" id="575788"/>
    <lineage>
        <taxon>Bacteria</taxon>
        <taxon>Pseudomonadati</taxon>
        <taxon>Pseudomonadota</taxon>
        <taxon>Gammaproteobacteria</taxon>
        <taxon>Vibrionales</taxon>
        <taxon>Vibrionaceae</taxon>
        <taxon>Vibrio</taxon>
    </lineage>
</organism>
<evidence type="ECO:0000255" key="1">
    <source>
        <dbReference type="HAMAP-Rule" id="MF_01690"/>
    </source>
</evidence>